<accession>Q5NQY1</accession>
<comment type="similarity">
    <text evidence="1">Belongs to the bacterial ribosomal protein bL33 family.</text>
</comment>
<proteinExistence type="inferred from homology"/>
<gene>
    <name evidence="1" type="primary">rpmG</name>
    <name type="ordered locus">ZMO0249</name>
</gene>
<name>RL33_ZYMMO</name>
<dbReference type="EMBL" id="AE008692">
    <property type="protein sequence ID" value="AAV88873.1"/>
    <property type="molecule type" value="Genomic_DNA"/>
</dbReference>
<dbReference type="RefSeq" id="WP_011240192.1">
    <property type="nucleotide sequence ID" value="NZ_CP035711.1"/>
</dbReference>
<dbReference type="SMR" id="Q5NQY1"/>
<dbReference type="STRING" id="264203.ZMO0249"/>
<dbReference type="GeneID" id="79904523"/>
<dbReference type="KEGG" id="zmo:ZMO0249"/>
<dbReference type="eggNOG" id="COG0267">
    <property type="taxonomic scope" value="Bacteria"/>
</dbReference>
<dbReference type="HOGENOM" id="CLU_190949_1_1_5"/>
<dbReference type="Proteomes" id="UP000001173">
    <property type="component" value="Chromosome"/>
</dbReference>
<dbReference type="GO" id="GO:0022625">
    <property type="term" value="C:cytosolic large ribosomal subunit"/>
    <property type="evidence" value="ECO:0007669"/>
    <property type="project" value="TreeGrafter"/>
</dbReference>
<dbReference type="GO" id="GO:0003735">
    <property type="term" value="F:structural constituent of ribosome"/>
    <property type="evidence" value="ECO:0007669"/>
    <property type="project" value="InterPro"/>
</dbReference>
<dbReference type="GO" id="GO:0006412">
    <property type="term" value="P:translation"/>
    <property type="evidence" value="ECO:0007669"/>
    <property type="project" value="UniProtKB-UniRule"/>
</dbReference>
<dbReference type="Gene3D" id="2.20.28.120">
    <property type="entry name" value="Ribosomal protein L33"/>
    <property type="match status" value="1"/>
</dbReference>
<dbReference type="HAMAP" id="MF_00294">
    <property type="entry name" value="Ribosomal_bL33"/>
    <property type="match status" value="1"/>
</dbReference>
<dbReference type="InterPro" id="IPR001705">
    <property type="entry name" value="Ribosomal_bL33"/>
</dbReference>
<dbReference type="InterPro" id="IPR018264">
    <property type="entry name" value="Ribosomal_bL33_CS"/>
</dbReference>
<dbReference type="InterPro" id="IPR038584">
    <property type="entry name" value="Ribosomal_bL33_sf"/>
</dbReference>
<dbReference type="InterPro" id="IPR011332">
    <property type="entry name" value="Ribosomal_zn-bd"/>
</dbReference>
<dbReference type="NCBIfam" id="NF001860">
    <property type="entry name" value="PRK00595.1"/>
    <property type="match status" value="1"/>
</dbReference>
<dbReference type="NCBIfam" id="TIGR01023">
    <property type="entry name" value="rpmG_bact"/>
    <property type="match status" value="1"/>
</dbReference>
<dbReference type="PANTHER" id="PTHR15238">
    <property type="entry name" value="54S RIBOSOMAL PROTEIN L39, MITOCHONDRIAL"/>
    <property type="match status" value="1"/>
</dbReference>
<dbReference type="PANTHER" id="PTHR15238:SF1">
    <property type="entry name" value="LARGE RIBOSOMAL SUBUNIT PROTEIN BL33M"/>
    <property type="match status" value="1"/>
</dbReference>
<dbReference type="Pfam" id="PF00471">
    <property type="entry name" value="Ribosomal_L33"/>
    <property type="match status" value="1"/>
</dbReference>
<dbReference type="SUPFAM" id="SSF57829">
    <property type="entry name" value="Zn-binding ribosomal proteins"/>
    <property type="match status" value="1"/>
</dbReference>
<dbReference type="PROSITE" id="PS00582">
    <property type="entry name" value="RIBOSOMAL_L33"/>
    <property type="match status" value="1"/>
</dbReference>
<reference key="1">
    <citation type="journal article" date="2005" name="Nat. Biotechnol.">
        <title>The genome sequence of the ethanologenic bacterium Zymomonas mobilis ZM4.</title>
        <authorList>
            <person name="Seo J.-S."/>
            <person name="Chong H."/>
            <person name="Park H.S."/>
            <person name="Yoon K.-O."/>
            <person name="Jung C."/>
            <person name="Kim J.J."/>
            <person name="Hong J.H."/>
            <person name="Kim H."/>
            <person name="Kim J.-H."/>
            <person name="Kil J.-I."/>
            <person name="Park C.J."/>
            <person name="Oh H.-M."/>
            <person name="Lee J.-S."/>
            <person name="Jin S.-J."/>
            <person name="Um H.-W."/>
            <person name="Lee H.-J."/>
            <person name="Oh S.-J."/>
            <person name="Kim J.Y."/>
            <person name="Kang H.L."/>
            <person name="Lee S.Y."/>
            <person name="Lee K.J."/>
            <person name="Kang H.S."/>
        </authorList>
    </citation>
    <scope>NUCLEOTIDE SEQUENCE [LARGE SCALE GENOMIC DNA]</scope>
    <source>
        <strain>ATCC 31821 / ZM4 / CP4</strain>
    </source>
</reference>
<protein>
    <recommendedName>
        <fullName evidence="1">Large ribosomal subunit protein bL33</fullName>
    </recommendedName>
    <alternativeName>
        <fullName evidence="2">50S ribosomal protein L33</fullName>
    </alternativeName>
</protein>
<keyword id="KW-1185">Reference proteome</keyword>
<keyword id="KW-0687">Ribonucleoprotein</keyword>
<keyword id="KW-0689">Ribosomal protein</keyword>
<evidence type="ECO:0000255" key="1">
    <source>
        <dbReference type="HAMAP-Rule" id="MF_00294"/>
    </source>
</evidence>
<evidence type="ECO:0000305" key="2"/>
<sequence>MAKPTTVKIRLVSSADTGFFYVTRKNPRNQTEKMSLRKYDPVVRKHVEFKEAKIK</sequence>
<organism>
    <name type="scientific">Zymomonas mobilis subsp. mobilis (strain ATCC 31821 / ZM4 / CP4)</name>
    <dbReference type="NCBI Taxonomy" id="264203"/>
    <lineage>
        <taxon>Bacteria</taxon>
        <taxon>Pseudomonadati</taxon>
        <taxon>Pseudomonadota</taxon>
        <taxon>Alphaproteobacteria</taxon>
        <taxon>Sphingomonadales</taxon>
        <taxon>Zymomonadaceae</taxon>
        <taxon>Zymomonas</taxon>
    </lineage>
</organism>
<feature type="chain" id="PRO_0000356778" description="Large ribosomal subunit protein bL33">
    <location>
        <begin position="1"/>
        <end position="55"/>
    </location>
</feature>